<feature type="chain" id="PRO_0000277421" description="Acetyl-coenzyme A carboxylase carboxyl transferase subunit beta, chloroplastic">
    <location>
        <begin position="1"/>
        <end position="490"/>
    </location>
</feature>
<feature type="domain" description="CoA carboxyltransferase N-terminal" evidence="3">
    <location>
        <begin position="221"/>
        <end position="490"/>
    </location>
</feature>
<feature type="zinc finger region" description="C4-type" evidence="2">
    <location>
        <begin position="225"/>
        <end position="247"/>
    </location>
</feature>
<feature type="binding site" evidence="2">
    <location>
        <position position="225"/>
    </location>
    <ligand>
        <name>Zn(2+)</name>
        <dbReference type="ChEBI" id="CHEBI:29105"/>
    </ligand>
</feature>
<feature type="binding site" evidence="2">
    <location>
        <position position="228"/>
    </location>
    <ligand>
        <name>Zn(2+)</name>
        <dbReference type="ChEBI" id="CHEBI:29105"/>
    </ligand>
</feature>
<feature type="binding site" evidence="2">
    <location>
        <position position="244"/>
    </location>
    <ligand>
        <name>Zn(2+)</name>
        <dbReference type="ChEBI" id="CHEBI:29105"/>
    </ligand>
</feature>
<feature type="binding site" evidence="2">
    <location>
        <position position="247"/>
    </location>
    <ligand>
        <name>Zn(2+)</name>
        <dbReference type="ChEBI" id="CHEBI:29105"/>
    </ligand>
</feature>
<dbReference type="EC" id="2.1.3.15" evidence="2"/>
<dbReference type="EMBL" id="DQ347959">
    <property type="protein sequence ID" value="ABC56309.1"/>
    <property type="status" value="ALT_INIT"/>
    <property type="molecule type" value="Genomic_DNA"/>
</dbReference>
<dbReference type="EMBL" id="AM087200">
    <property type="protein sequence ID" value="CAJ32402.1"/>
    <property type="status" value="ALT_INIT"/>
    <property type="molecule type" value="Genomic_DNA"/>
</dbReference>
<dbReference type="RefSeq" id="AP_004937.1">
    <property type="nucleotide sequence ID" value="AC_000188.1"/>
</dbReference>
<dbReference type="RefSeq" id="XP_004228575.1">
    <property type="nucleotide sequence ID" value="XM_004228527.3"/>
</dbReference>
<dbReference type="RefSeq" id="YP_008563097.1">
    <property type="nucleotide sequence ID" value="NC_007898.3"/>
</dbReference>
<dbReference type="SMR" id="Q2MI91"/>
<dbReference type="FunCoup" id="Q2MI91">
    <property type="interactions" value="280"/>
</dbReference>
<dbReference type="STRING" id="4081.Q2MI91"/>
<dbReference type="PaxDb" id="4081-Solyc01g007340.2.1"/>
<dbReference type="GeneID" id="3950389"/>
<dbReference type="KEGG" id="sly:3950389"/>
<dbReference type="eggNOG" id="KOG0540">
    <property type="taxonomic scope" value="Eukaryota"/>
</dbReference>
<dbReference type="InParanoid" id="Q2MI91"/>
<dbReference type="OrthoDB" id="10053020at2759"/>
<dbReference type="UniPathway" id="UPA00655">
    <property type="reaction ID" value="UER00711"/>
</dbReference>
<dbReference type="Proteomes" id="UP000004994">
    <property type="component" value="Chloroplast"/>
</dbReference>
<dbReference type="ExpressionAtlas" id="Q2MI91">
    <property type="expression patterns" value="baseline"/>
</dbReference>
<dbReference type="GO" id="GO:0009317">
    <property type="term" value="C:acetyl-CoA carboxylase complex"/>
    <property type="evidence" value="ECO:0007669"/>
    <property type="project" value="InterPro"/>
</dbReference>
<dbReference type="GO" id="GO:0009570">
    <property type="term" value="C:chloroplast stroma"/>
    <property type="evidence" value="ECO:0007669"/>
    <property type="project" value="UniProtKB-SubCell"/>
</dbReference>
<dbReference type="GO" id="GO:0009575">
    <property type="term" value="C:chromoplast stroma"/>
    <property type="evidence" value="ECO:0007669"/>
    <property type="project" value="UniProtKB-SubCell"/>
</dbReference>
<dbReference type="GO" id="GO:0003989">
    <property type="term" value="F:acetyl-CoA carboxylase activity"/>
    <property type="evidence" value="ECO:0007669"/>
    <property type="project" value="InterPro"/>
</dbReference>
<dbReference type="GO" id="GO:0005524">
    <property type="term" value="F:ATP binding"/>
    <property type="evidence" value="ECO:0007669"/>
    <property type="project" value="UniProtKB-KW"/>
</dbReference>
<dbReference type="GO" id="GO:0016743">
    <property type="term" value="F:carboxyl- or carbamoyltransferase activity"/>
    <property type="evidence" value="ECO:0007669"/>
    <property type="project" value="UniProtKB-UniRule"/>
</dbReference>
<dbReference type="GO" id="GO:0008270">
    <property type="term" value="F:zinc ion binding"/>
    <property type="evidence" value="ECO:0007669"/>
    <property type="project" value="UniProtKB-UniRule"/>
</dbReference>
<dbReference type="GO" id="GO:0006633">
    <property type="term" value="P:fatty acid biosynthetic process"/>
    <property type="evidence" value="ECO:0000318"/>
    <property type="project" value="GO_Central"/>
</dbReference>
<dbReference type="GO" id="GO:2001295">
    <property type="term" value="P:malonyl-CoA biosynthetic process"/>
    <property type="evidence" value="ECO:0007669"/>
    <property type="project" value="UniProtKB-UniRule"/>
</dbReference>
<dbReference type="Gene3D" id="3.90.226.10">
    <property type="entry name" value="2-enoyl-CoA Hydratase, Chain A, domain 1"/>
    <property type="match status" value="1"/>
</dbReference>
<dbReference type="HAMAP" id="MF_01395">
    <property type="entry name" value="AcetylCoA_CT_beta"/>
    <property type="match status" value="1"/>
</dbReference>
<dbReference type="InterPro" id="IPR034733">
    <property type="entry name" value="AcCoA_carboxyl_beta"/>
</dbReference>
<dbReference type="InterPro" id="IPR000438">
    <property type="entry name" value="Acetyl_CoA_COase_Trfase_b_su"/>
</dbReference>
<dbReference type="InterPro" id="IPR029045">
    <property type="entry name" value="ClpP/crotonase-like_dom_sf"/>
</dbReference>
<dbReference type="InterPro" id="IPR011762">
    <property type="entry name" value="COA_CT_N"/>
</dbReference>
<dbReference type="NCBIfam" id="TIGR00515">
    <property type="entry name" value="accD"/>
    <property type="match status" value="1"/>
</dbReference>
<dbReference type="PANTHER" id="PTHR42995">
    <property type="entry name" value="ACETYL-COENZYME A CARBOXYLASE CARBOXYL TRANSFERASE SUBUNIT BETA, CHLOROPLASTIC"/>
    <property type="match status" value="1"/>
</dbReference>
<dbReference type="PANTHER" id="PTHR42995:SF5">
    <property type="entry name" value="ACETYL-COENZYME A CARBOXYLASE CARBOXYL TRANSFERASE SUBUNIT BETA, CHLOROPLASTIC"/>
    <property type="match status" value="1"/>
</dbReference>
<dbReference type="Pfam" id="PF01039">
    <property type="entry name" value="Carboxyl_trans"/>
    <property type="match status" value="1"/>
</dbReference>
<dbReference type="PRINTS" id="PR01070">
    <property type="entry name" value="ACCCTRFRASEB"/>
</dbReference>
<dbReference type="SUPFAM" id="SSF52096">
    <property type="entry name" value="ClpP/crotonase"/>
    <property type="match status" value="1"/>
</dbReference>
<dbReference type="PROSITE" id="PS50980">
    <property type="entry name" value="COA_CT_NTER"/>
    <property type="match status" value="1"/>
</dbReference>
<sequence length="490" mass="55674">MERWWFNSMLFKKEFERRCGLNKSMGSLGPIENTSEDPNLKVKNIHSCSNVDYLFGVKDIWNFISNDTFLVSDRNGDSYSIYFDIENHIFEVDNDHSFLSELESSFYSYRNSSYLNNGFRGEDPYYNSYMSYMYDTQYSWNNHINSCIDNYLQSQICIDTSIISGSESNGDSYIYRAICSGQSLNSSENEGSSRRTRTKDSDLTIRESSNDLEVTQKYKHLWVQCENCYGLNYKKFLKSKMNICEQCGYHLKMSSSDRIELLIDPGTWDPMDEDMVSLDPIEFHSEEEPYKDRIDSYQRKTGLTEAVQTGIGQLNGIPVAIGVMDFQFMGGSMGSVVGEKITRLIEHAANQNLPLMIVCASGGARMQEGSLSLMQMAKISSALYDYQLNKKLFYVSILTSPTTGGVTASFGMLGDIIIAEPNAYIAFAGKRVIEQTLNKTVPEGSQAAEYLFQKGLFDLIVPRNLLKSVLSELFKLHAFFPLNQKSSKIK</sequence>
<organism>
    <name type="scientific">Solanum lycopersicum</name>
    <name type="common">Tomato</name>
    <name type="synonym">Lycopersicon esculentum</name>
    <dbReference type="NCBI Taxonomy" id="4081"/>
    <lineage>
        <taxon>Eukaryota</taxon>
        <taxon>Viridiplantae</taxon>
        <taxon>Streptophyta</taxon>
        <taxon>Embryophyta</taxon>
        <taxon>Tracheophyta</taxon>
        <taxon>Spermatophyta</taxon>
        <taxon>Magnoliopsida</taxon>
        <taxon>eudicotyledons</taxon>
        <taxon>Gunneridae</taxon>
        <taxon>Pentapetalae</taxon>
        <taxon>asterids</taxon>
        <taxon>lamiids</taxon>
        <taxon>Solanales</taxon>
        <taxon>Solanaceae</taxon>
        <taxon>Solanoideae</taxon>
        <taxon>Solaneae</taxon>
        <taxon>Solanum</taxon>
        <taxon>Solanum subgen. Lycopersicon</taxon>
    </lineage>
</organism>
<name>ACCD_SOLLC</name>
<evidence type="ECO:0000250" key="1"/>
<evidence type="ECO:0000255" key="2">
    <source>
        <dbReference type="HAMAP-Rule" id="MF_01395"/>
    </source>
</evidence>
<evidence type="ECO:0000255" key="3">
    <source>
        <dbReference type="PROSITE-ProRule" id="PRU01136"/>
    </source>
</evidence>
<evidence type="ECO:0000269" key="4">
    <source>
    </source>
</evidence>
<evidence type="ECO:0000305" key="5"/>
<protein>
    <recommendedName>
        <fullName evidence="2">Acetyl-coenzyme A carboxylase carboxyl transferase subunit beta, chloroplastic</fullName>
        <shortName evidence="2">ACCase subunit beta</shortName>
        <shortName evidence="2">Acetyl-CoA carboxylase carboxyltransferase subunit beta</shortName>
        <ecNumber evidence="2">2.1.3.15</ecNumber>
    </recommendedName>
</protein>
<geneLocation type="chloroplast"/>
<keyword id="KW-0067">ATP-binding</keyword>
<keyword id="KW-0150">Chloroplast</keyword>
<keyword id="KW-0957">Chromoplast</keyword>
<keyword id="KW-0275">Fatty acid biosynthesis</keyword>
<keyword id="KW-0276">Fatty acid metabolism</keyword>
<keyword id="KW-0444">Lipid biosynthesis</keyword>
<keyword id="KW-0443">Lipid metabolism</keyword>
<keyword id="KW-0479">Metal-binding</keyword>
<keyword id="KW-0547">Nucleotide-binding</keyword>
<keyword id="KW-0934">Plastid</keyword>
<keyword id="KW-1185">Reference proteome</keyword>
<keyword id="KW-0808">Transferase</keyword>
<keyword id="KW-0862">Zinc</keyword>
<keyword id="KW-0863">Zinc-finger</keyword>
<comment type="function">
    <text evidence="2">Component of the acetyl coenzyme A carboxylase (ACC) complex. Biotin carboxylase (BC) catalyzes the carboxylation of biotin on its carrier protein (BCCP) and then the CO(2) group is transferred by the transcarboxylase to acetyl-CoA to form malonyl-CoA (By similarity). Is up-regulated upon chromoplast differentiation, presumably for fatty acid biosynthesis.</text>
</comment>
<comment type="catalytic activity">
    <reaction evidence="2">
        <text>N(6)-carboxybiotinyl-L-lysyl-[protein] + acetyl-CoA = N(6)-biotinyl-L-lysyl-[protein] + malonyl-CoA</text>
        <dbReference type="Rhea" id="RHEA:54728"/>
        <dbReference type="Rhea" id="RHEA-COMP:10505"/>
        <dbReference type="Rhea" id="RHEA-COMP:10506"/>
        <dbReference type="ChEBI" id="CHEBI:57288"/>
        <dbReference type="ChEBI" id="CHEBI:57384"/>
        <dbReference type="ChEBI" id="CHEBI:83144"/>
        <dbReference type="ChEBI" id="CHEBI:83145"/>
        <dbReference type="EC" id="2.1.3.15"/>
    </reaction>
</comment>
<comment type="cofactor">
    <cofactor evidence="2">
        <name>Zn(2+)</name>
        <dbReference type="ChEBI" id="CHEBI:29105"/>
    </cofactor>
    <text evidence="2">Binds 1 zinc ion per subunit.</text>
</comment>
<comment type="pathway">
    <text evidence="2">Lipid metabolism; malonyl-CoA biosynthesis; malonyl-CoA from acetyl-CoA: step 1/1.</text>
</comment>
<comment type="subunit">
    <text evidence="1">Acetyl-CoA carboxylase is a heterohexamer composed of biotin carboxyl carrier protein, biotin carboxylase and 2 subunits each of ACCase subunit alpha and ACCase plastid-coded subunit beta (accD).</text>
</comment>
<comment type="subcellular location">
    <subcellularLocation>
        <location evidence="5">Plastid</location>
        <location evidence="5">Chloroplast stroma</location>
    </subcellularLocation>
    <subcellularLocation>
        <location evidence="5">Plastid</location>
        <location evidence="5">Chromoplast stroma</location>
    </subcellularLocation>
</comment>
<comment type="tissue specificity">
    <text>Expressed in leaves, ripening and mature fruit.</text>
</comment>
<comment type="developmental stage">
    <text evidence="4">Transcription is reduced upon fruit development; as fruit ripens and chloroplasts differentiate into chromoplasts transcripts increase again. Protein levels also increase in chromoplasts (at protein level).</text>
</comment>
<comment type="similarity">
    <text evidence="2">Belongs to the AccD/PCCB family.</text>
</comment>
<comment type="sequence caution" evidence="5">
    <conflict type="erroneous initiation">
        <sequence resource="EMBL-CDS" id="ABC56309"/>
    </conflict>
</comment>
<comment type="sequence caution" evidence="5">
    <conflict type="erroneous initiation">
        <sequence resource="EMBL-CDS" id="CAJ32402"/>
    </conflict>
</comment>
<accession>Q2MI91</accession>
<reference key="1">
    <citation type="journal article" date="2006" name="Theor. Appl. Genet.">
        <title>Complete chloroplast genome sequences of Solanum bulbocastanum, Solanum lycopersicum and comparative analyses with other Solanaceae genomes.</title>
        <authorList>
            <person name="Daniell H."/>
            <person name="Lee S.-B."/>
            <person name="Grevich J."/>
            <person name="Saski C."/>
            <person name="Quesada-Vargas T."/>
            <person name="Guda C."/>
            <person name="Tomkins J."/>
            <person name="Jansen R.K."/>
        </authorList>
    </citation>
    <scope>NUCLEOTIDE SEQUENCE [LARGE SCALE GENOMIC DNA]</scope>
    <source>
        <strain>cv. LA3023</strain>
    </source>
</reference>
<reference key="2">
    <citation type="journal article" date="2006" name="J. Mol. Evol.">
        <title>Sequence of the tomato chloroplast DNA and evolutionary comparison of solanaceous plastid genomes.</title>
        <authorList>
            <person name="Kahlau S."/>
            <person name="Aspinall S."/>
            <person name="Gray J.C."/>
            <person name="Bock R."/>
        </authorList>
    </citation>
    <scope>NUCLEOTIDE SEQUENCE [LARGE SCALE GENOMIC DNA]</scope>
    <source>
        <strain>cv. IPA-6</strain>
    </source>
</reference>
<reference key="3">
    <citation type="journal article" date="2008" name="Plant Cell">
        <title>Plastid transcriptomics and translatomics of tomato fruit development and chloroplast-to-chromoplast differentiation: chromoplast gene expression largely serves the production of a single protein.</title>
        <authorList>
            <person name="Kahlau S."/>
            <person name="Bock R."/>
        </authorList>
    </citation>
    <scope>LEVEL OF PROTEIN EXPRESSION</scope>
    <scope>DEVELOPMENTAL STAGE</scope>
    <source>
        <strain>cv. IPA-6</strain>
    </source>
</reference>
<proteinExistence type="evidence at protein level"/>
<gene>
    <name evidence="2" type="primary">accD</name>
</gene>